<gene>
    <name evidence="1" type="primary">rpsT</name>
    <name type="ordered locus">Geob_2174</name>
</gene>
<protein>
    <recommendedName>
        <fullName evidence="1">Small ribosomal subunit protein bS20</fullName>
    </recommendedName>
    <alternativeName>
        <fullName evidence="3">30S ribosomal protein S20</fullName>
    </alternativeName>
</protein>
<reference key="1">
    <citation type="submission" date="2009-01" db="EMBL/GenBank/DDBJ databases">
        <title>Complete sequence of Geobacter sp. FRC-32.</title>
        <authorList>
            <consortium name="US DOE Joint Genome Institute"/>
            <person name="Lucas S."/>
            <person name="Copeland A."/>
            <person name="Lapidus A."/>
            <person name="Glavina del Rio T."/>
            <person name="Dalin E."/>
            <person name="Tice H."/>
            <person name="Bruce D."/>
            <person name="Goodwin L."/>
            <person name="Pitluck S."/>
            <person name="Saunders E."/>
            <person name="Brettin T."/>
            <person name="Detter J.C."/>
            <person name="Han C."/>
            <person name="Larimer F."/>
            <person name="Land M."/>
            <person name="Hauser L."/>
            <person name="Kyrpides N."/>
            <person name="Ovchinnikova G."/>
            <person name="Kostka J."/>
            <person name="Richardson P."/>
        </authorList>
    </citation>
    <scope>NUCLEOTIDE SEQUENCE [LARGE SCALE GENOMIC DNA]</scope>
    <source>
        <strain>DSM 22248 / JCM 15807 / FRC-32</strain>
    </source>
</reference>
<accession>B9M9F6</accession>
<keyword id="KW-1185">Reference proteome</keyword>
<keyword id="KW-0687">Ribonucleoprotein</keyword>
<keyword id="KW-0689">Ribosomal protein</keyword>
<keyword id="KW-0694">RNA-binding</keyword>
<keyword id="KW-0699">rRNA-binding</keyword>
<comment type="function">
    <text evidence="1">Binds directly to 16S ribosomal RNA.</text>
</comment>
<comment type="similarity">
    <text evidence="1">Belongs to the bacterial ribosomal protein bS20 family.</text>
</comment>
<organism>
    <name type="scientific">Geotalea daltonii (strain DSM 22248 / JCM 15807 / FRC-32)</name>
    <name type="common">Geobacter daltonii</name>
    <dbReference type="NCBI Taxonomy" id="316067"/>
    <lineage>
        <taxon>Bacteria</taxon>
        <taxon>Pseudomonadati</taxon>
        <taxon>Thermodesulfobacteriota</taxon>
        <taxon>Desulfuromonadia</taxon>
        <taxon>Geobacterales</taxon>
        <taxon>Geobacteraceae</taxon>
        <taxon>Geotalea</taxon>
    </lineage>
</organism>
<evidence type="ECO:0000255" key="1">
    <source>
        <dbReference type="HAMAP-Rule" id="MF_00500"/>
    </source>
</evidence>
<evidence type="ECO:0000256" key="2">
    <source>
        <dbReference type="SAM" id="MobiDB-lite"/>
    </source>
</evidence>
<evidence type="ECO:0000305" key="3"/>
<name>RS20_GEODF</name>
<feature type="chain" id="PRO_1000194246" description="Small ribosomal subunit protein bS20">
    <location>
        <begin position="1"/>
        <end position="87"/>
    </location>
</feature>
<feature type="region of interest" description="Disordered" evidence="2">
    <location>
        <begin position="1"/>
        <end position="23"/>
    </location>
</feature>
<feature type="compositionally biased region" description="Basic residues" evidence="2">
    <location>
        <begin position="1"/>
        <end position="11"/>
    </location>
</feature>
<sequence>MANHKSALKRIKQTEKRTERNRHVRSTLRTFIKRVREAVAAKDANLAKEALAAAIPVIDGAASKGVIHSSNASRSVSRLTKLVNTLS</sequence>
<proteinExistence type="inferred from homology"/>
<dbReference type="EMBL" id="CP001390">
    <property type="protein sequence ID" value="ACM20528.1"/>
    <property type="molecule type" value="Genomic_DNA"/>
</dbReference>
<dbReference type="RefSeq" id="WP_012647257.1">
    <property type="nucleotide sequence ID" value="NC_011979.1"/>
</dbReference>
<dbReference type="SMR" id="B9M9F6"/>
<dbReference type="STRING" id="316067.Geob_2174"/>
<dbReference type="KEGG" id="geo:Geob_2174"/>
<dbReference type="eggNOG" id="COG0268">
    <property type="taxonomic scope" value="Bacteria"/>
</dbReference>
<dbReference type="HOGENOM" id="CLU_160655_3_1_7"/>
<dbReference type="OrthoDB" id="9807974at2"/>
<dbReference type="Proteomes" id="UP000007721">
    <property type="component" value="Chromosome"/>
</dbReference>
<dbReference type="GO" id="GO:0005829">
    <property type="term" value="C:cytosol"/>
    <property type="evidence" value="ECO:0007669"/>
    <property type="project" value="TreeGrafter"/>
</dbReference>
<dbReference type="GO" id="GO:0015935">
    <property type="term" value="C:small ribosomal subunit"/>
    <property type="evidence" value="ECO:0007669"/>
    <property type="project" value="TreeGrafter"/>
</dbReference>
<dbReference type="GO" id="GO:0070181">
    <property type="term" value="F:small ribosomal subunit rRNA binding"/>
    <property type="evidence" value="ECO:0007669"/>
    <property type="project" value="TreeGrafter"/>
</dbReference>
<dbReference type="GO" id="GO:0003735">
    <property type="term" value="F:structural constituent of ribosome"/>
    <property type="evidence" value="ECO:0007669"/>
    <property type="project" value="InterPro"/>
</dbReference>
<dbReference type="GO" id="GO:0006412">
    <property type="term" value="P:translation"/>
    <property type="evidence" value="ECO:0007669"/>
    <property type="project" value="UniProtKB-UniRule"/>
</dbReference>
<dbReference type="FunFam" id="1.20.58.110:FF:000001">
    <property type="entry name" value="30S ribosomal protein S20"/>
    <property type="match status" value="1"/>
</dbReference>
<dbReference type="Gene3D" id="1.20.58.110">
    <property type="entry name" value="Ribosomal protein S20"/>
    <property type="match status" value="1"/>
</dbReference>
<dbReference type="HAMAP" id="MF_00500">
    <property type="entry name" value="Ribosomal_bS20"/>
    <property type="match status" value="1"/>
</dbReference>
<dbReference type="InterPro" id="IPR002583">
    <property type="entry name" value="Ribosomal_bS20"/>
</dbReference>
<dbReference type="InterPro" id="IPR036510">
    <property type="entry name" value="Ribosomal_bS20_sf"/>
</dbReference>
<dbReference type="NCBIfam" id="TIGR00029">
    <property type="entry name" value="S20"/>
    <property type="match status" value="1"/>
</dbReference>
<dbReference type="PANTHER" id="PTHR33398">
    <property type="entry name" value="30S RIBOSOMAL PROTEIN S20"/>
    <property type="match status" value="1"/>
</dbReference>
<dbReference type="PANTHER" id="PTHR33398:SF1">
    <property type="entry name" value="SMALL RIBOSOMAL SUBUNIT PROTEIN BS20C"/>
    <property type="match status" value="1"/>
</dbReference>
<dbReference type="Pfam" id="PF01649">
    <property type="entry name" value="Ribosomal_S20p"/>
    <property type="match status" value="1"/>
</dbReference>
<dbReference type="SUPFAM" id="SSF46992">
    <property type="entry name" value="Ribosomal protein S20"/>
    <property type="match status" value="1"/>
</dbReference>